<organism>
    <name type="scientific">Lactiplantibacillus plantarum (strain ATCC BAA-793 / NCIMB 8826 / WCFS1)</name>
    <name type="common">Lactobacillus plantarum</name>
    <dbReference type="NCBI Taxonomy" id="220668"/>
    <lineage>
        <taxon>Bacteria</taxon>
        <taxon>Bacillati</taxon>
        <taxon>Bacillota</taxon>
        <taxon>Bacilli</taxon>
        <taxon>Lactobacillales</taxon>
        <taxon>Lactobacillaceae</taxon>
        <taxon>Lactiplantibacillus</taxon>
    </lineage>
</organism>
<proteinExistence type="inferred from homology"/>
<gene>
    <name evidence="1" type="primary">mraY</name>
    <name type="ordered locus">lp_2199</name>
</gene>
<feature type="chain" id="PRO_0000108841" description="Phospho-N-acetylmuramoyl-pentapeptide-transferase">
    <location>
        <begin position="1"/>
        <end position="321"/>
    </location>
</feature>
<feature type="transmembrane region" description="Helical" evidence="1">
    <location>
        <begin position="1"/>
        <end position="21"/>
    </location>
</feature>
<feature type="transmembrane region" description="Helical" evidence="1">
    <location>
        <begin position="53"/>
        <end position="73"/>
    </location>
</feature>
<feature type="transmembrane region" description="Helical" evidence="1">
    <location>
        <begin position="77"/>
        <end position="97"/>
    </location>
</feature>
<feature type="transmembrane region" description="Helical" evidence="1">
    <location>
        <begin position="110"/>
        <end position="130"/>
    </location>
</feature>
<feature type="transmembrane region" description="Helical" evidence="1">
    <location>
        <begin position="145"/>
        <end position="165"/>
    </location>
</feature>
<feature type="transmembrane region" description="Helical" evidence="1">
    <location>
        <begin position="174"/>
        <end position="194"/>
    </location>
</feature>
<feature type="transmembrane region" description="Helical" evidence="1">
    <location>
        <begin position="200"/>
        <end position="220"/>
    </location>
</feature>
<feature type="transmembrane region" description="Helical" evidence="1">
    <location>
        <begin position="226"/>
        <end position="248"/>
    </location>
</feature>
<feature type="transmembrane region" description="Helical" evidence="1">
    <location>
        <begin position="301"/>
        <end position="321"/>
    </location>
</feature>
<comment type="function">
    <text evidence="1">Catalyzes the initial step of the lipid cycle reactions in the biosynthesis of the cell wall peptidoglycan: transfers peptidoglycan precursor phospho-MurNAc-pentapeptide from UDP-MurNAc-pentapeptide onto the lipid carrier undecaprenyl phosphate, yielding undecaprenyl-pyrophosphoryl-MurNAc-pentapeptide, known as lipid I.</text>
</comment>
<comment type="catalytic activity">
    <reaction evidence="1">
        <text>UDP-N-acetyl-alpha-D-muramoyl-L-alanyl-gamma-D-glutamyl-L-lysyl-D-alanyl-D-alanine + di-trans,octa-cis-undecaprenyl phosphate = Mur2Ac(oyl-L-Ala-gamma-D-Glu-L-Lys-D-Ala-D-Ala)-di-trans,octa-cis-undecaprenyl diphosphate + UMP</text>
        <dbReference type="Rhea" id="RHEA:21920"/>
        <dbReference type="ChEBI" id="CHEBI:57865"/>
        <dbReference type="ChEBI" id="CHEBI:60032"/>
        <dbReference type="ChEBI" id="CHEBI:60392"/>
        <dbReference type="ChEBI" id="CHEBI:70758"/>
        <dbReference type="EC" id="2.7.8.13"/>
    </reaction>
</comment>
<comment type="cofactor">
    <cofactor evidence="1">
        <name>Mg(2+)</name>
        <dbReference type="ChEBI" id="CHEBI:18420"/>
    </cofactor>
</comment>
<comment type="pathway">
    <text evidence="1">Cell wall biogenesis; peptidoglycan biosynthesis.</text>
</comment>
<comment type="subcellular location">
    <subcellularLocation>
        <location evidence="1">Cell membrane</location>
        <topology evidence="1">Multi-pass membrane protein</topology>
    </subcellularLocation>
</comment>
<comment type="similarity">
    <text evidence="1">Belongs to the glycosyltransferase 4 family. MraY subfamily.</text>
</comment>
<dbReference type="EC" id="2.7.8.13" evidence="1"/>
<dbReference type="EMBL" id="AL935263">
    <property type="protein sequence ID" value="CCC79417.1"/>
    <property type="molecule type" value="Genomic_DNA"/>
</dbReference>
<dbReference type="RefSeq" id="WP_003640859.1">
    <property type="nucleotide sequence ID" value="NC_004567.2"/>
</dbReference>
<dbReference type="RefSeq" id="YP_004889931.1">
    <property type="nucleotide sequence ID" value="NC_004567.2"/>
</dbReference>
<dbReference type="SMR" id="Q88V79"/>
<dbReference type="STRING" id="220668.lp_2199"/>
<dbReference type="DNASU" id="1063536"/>
<dbReference type="EnsemblBacteria" id="CCC79417">
    <property type="protein sequence ID" value="CCC79417"/>
    <property type="gene ID" value="lp_2199"/>
</dbReference>
<dbReference type="KEGG" id="lpl:lp_2199"/>
<dbReference type="PATRIC" id="fig|220668.9.peg.1858"/>
<dbReference type="eggNOG" id="COG0472">
    <property type="taxonomic scope" value="Bacteria"/>
</dbReference>
<dbReference type="HOGENOM" id="CLU_023982_0_1_9"/>
<dbReference type="OrthoDB" id="9805475at2"/>
<dbReference type="PhylomeDB" id="Q88V79"/>
<dbReference type="UniPathway" id="UPA00219"/>
<dbReference type="Proteomes" id="UP000000432">
    <property type="component" value="Chromosome"/>
</dbReference>
<dbReference type="GO" id="GO:0005886">
    <property type="term" value="C:plasma membrane"/>
    <property type="evidence" value="ECO:0007669"/>
    <property type="project" value="UniProtKB-SubCell"/>
</dbReference>
<dbReference type="GO" id="GO:0046872">
    <property type="term" value="F:metal ion binding"/>
    <property type="evidence" value="ECO:0007669"/>
    <property type="project" value="UniProtKB-KW"/>
</dbReference>
<dbReference type="GO" id="GO:0008963">
    <property type="term" value="F:phospho-N-acetylmuramoyl-pentapeptide-transferase activity"/>
    <property type="evidence" value="ECO:0007669"/>
    <property type="project" value="UniProtKB-UniRule"/>
</dbReference>
<dbReference type="GO" id="GO:0051301">
    <property type="term" value="P:cell division"/>
    <property type="evidence" value="ECO:0007669"/>
    <property type="project" value="UniProtKB-KW"/>
</dbReference>
<dbReference type="GO" id="GO:0071555">
    <property type="term" value="P:cell wall organization"/>
    <property type="evidence" value="ECO:0007669"/>
    <property type="project" value="UniProtKB-KW"/>
</dbReference>
<dbReference type="GO" id="GO:0009252">
    <property type="term" value="P:peptidoglycan biosynthetic process"/>
    <property type="evidence" value="ECO:0007669"/>
    <property type="project" value="UniProtKB-UniRule"/>
</dbReference>
<dbReference type="GO" id="GO:0008360">
    <property type="term" value="P:regulation of cell shape"/>
    <property type="evidence" value="ECO:0007669"/>
    <property type="project" value="UniProtKB-KW"/>
</dbReference>
<dbReference type="CDD" id="cd06852">
    <property type="entry name" value="GT_MraY"/>
    <property type="match status" value="1"/>
</dbReference>
<dbReference type="HAMAP" id="MF_00038">
    <property type="entry name" value="MraY"/>
    <property type="match status" value="1"/>
</dbReference>
<dbReference type="InterPro" id="IPR000715">
    <property type="entry name" value="Glycosyl_transferase_4"/>
</dbReference>
<dbReference type="InterPro" id="IPR003524">
    <property type="entry name" value="PNAcMuramoyl-5peptid_Trfase"/>
</dbReference>
<dbReference type="InterPro" id="IPR018480">
    <property type="entry name" value="PNAcMuramoyl-5peptid_Trfase_CS"/>
</dbReference>
<dbReference type="NCBIfam" id="TIGR00445">
    <property type="entry name" value="mraY"/>
    <property type="match status" value="1"/>
</dbReference>
<dbReference type="PANTHER" id="PTHR22926">
    <property type="entry name" value="PHOSPHO-N-ACETYLMURAMOYL-PENTAPEPTIDE-TRANSFERASE"/>
    <property type="match status" value="1"/>
</dbReference>
<dbReference type="PANTHER" id="PTHR22926:SF5">
    <property type="entry name" value="PHOSPHO-N-ACETYLMURAMOYL-PENTAPEPTIDE-TRANSFERASE HOMOLOG"/>
    <property type="match status" value="1"/>
</dbReference>
<dbReference type="Pfam" id="PF00953">
    <property type="entry name" value="Glycos_transf_4"/>
    <property type="match status" value="1"/>
</dbReference>
<dbReference type="Pfam" id="PF10555">
    <property type="entry name" value="MraY_sig1"/>
    <property type="match status" value="1"/>
</dbReference>
<dbReference type="PROSITE" id="PS01347">
    <property type="entry name" value="MRAY_1"/>
    <property type="match status" value="1"/>
</dbReference>
<dbReference type="PROSITE" id="PS01348">
    <property type="entry name" value="MRAY_2"/>
    <property type="match status" value="1"/>
</dbReference>
<reference key="1">
    <citation type="journal article" date="2003" name="Proc. Natl. Acad. Sci. U.S.A.">
        <title>Complete genome sequence of Lactobacillus plantarum WCFS1.</title>
        <authorList>
            <person name="Kleerebezem M."/>
            <person name="Boekhorst J."/>
            <person name="van Kranenburg R."/>
            <person name="Molenaar D."/>
            <person name="Kuipers O.P."/>
            <person name="Leer R."/>
            <person name="Tarchini R."/>
            <person name="Peters S.A."/>
            <person name="Sandbrink H.M."/>
            <person name="Fiers M.W.E.J."/>
            <person name="Stiekema W."/>
            <person name="Klein Lankhorst R.M."/>
            <person name="Bron P.A."/>
            <person name="Hoffer S.M."/>
            <person name="Nierop Groot M.N."/>
            <person name="Kerkhoven R."/>
            <person name="De Vries M."/>
            <person name="Ursing B."/>
            <person name="De Vos W.M."/>
            <person name="Siezen R.J."/>
        </authorList>
    </citation>
    <scope>NUCLEOTIDE SEQUENCE [LARGE SCALE GENOMIC DNA]</scope>
    <source>
        <strain>ATCC BAA-793 / NCIMB 8826 / WCFS1</strain>
    </source>
</reference>
<reference key="2">
    <citation type="journal article" date="2012" name="J. Bacteriol.">
        <title>Complete resequencing and reannotation of the Lactobacillus plantarum WCFS1 genome.</title>
        <authorList>
            <person name="Siezen R.J."/>
            <person name="Francke C."/>
            <person name="Renckens B."/>
            <person name="Boekhorst J."/>
            <person name="Wels M."/>
            <person name="Kleerebezem M."/>
            <person name="van Hijum S.A."/>
        </authorList>
    </citation>
    <scope>NUCLEOTIDE SEQUENCE [LARGE SCALE GENOMIC DNA]</scope>
    <scope>GENOME REANNOTATION</scope>
    <source>
        <strain>ATCC BAA-793 / NCIMB 8826 / WCFS1</strain>
    </source>
</reference>
<accession>Q88V79</accession>
<accession>F9UQC8</accession>
<evidence type="ECO:0000255" key="1">
    <source>
        <dbReference type="HAMAP-Rule" id="MF_00038"/>
    </source>
</evidence>
<name>MRAY_LACPL</name>
<keyword id="KW-0131">Cell cycle</keyword>
<keyword id="KW-0132">Cell division</keyword>
<keyword id="KW-1003">Cell membrane</keyword>
<keyword id="KW-0133">Cell shape</keyword>
<keyword id="KW-0961">Cell wall biogenesis/degradation</keyword>
<keyword id="KW-0460">Magnesium</keyword>
<keyword id="KW-0472">Membrane</keyword>
<keyword id="KW-0479">Metal-binding</keyword>
<keyword id="KW-0573">Peptidoglycan synthesis</keyword>
<keyword id="KW-1185">Reference proteome</keyword>
<keyword id="KW-0808">Transferase</keyword>
<keyword id="KW-0812">Transmembrane</keyword>
<keyword id="KW-1133">Transmembrane helix</keyword>
<protein>
    <recommendedName>
        <fullName evidence="1">Phospho-N-acetylmuramoyl-pentapeptide-transferase</fullName>
        <ecNumber evidence="1">2.7.8.13</ecNumber>
    </recommendedName>
    <alternativeName>
        <fullName evidence="1">UDP-MurNAc-pentapeptide phosphotransferase</fullName>
    </alternativeName>
</protein>
<sequence length="321" mass="35639">MSLLVWGATLISGFIIVFALMPSLIRYFRARKEGQMIREEGPKWHEKKSGTPTMGGLLFIIAILVTTLWVGGWQHQLQPTTWILMFILVLYGALGFWDDSIKLWRKQNEGLKAWQKLLGQVIGAVILTLVYQHEHLPMALRIPGLGVWSLGIWYMLFAIIWLVGFSNAVNLTDGLDGLVAGQATIAFGAYAVIAYAQNQYNVMLFCLAVVGSLLGFFVYNHKPAKIFMGDMGSLALGGALAAVSILLHHELSLLLIGIIFVIETASVILQVASFKLTGKRIFLMSPIHHHFEMKGWSEWKIDIVFWSIGLVAAVISVATII</sequence>